<accession>Q5LCS1</accession>
<organism>
    <name type="scientific">Bacteroides fragilis (strain ATCC 25285 / DSM 2151 / CCUG 4856 / JCM 11019 / LMG 10263 / NCTC 9343 / Onslow / VPI 2553 / EN-2)</name>
    <dbReference type="NCBI Taxonomy" id="272559"/>
    <lineage>
        <taxon>Bacteria</taxon>
        <taxon>Pseudomonadati</taxon>
        <taxon>Bacteroidota</taxon>
        <taxon>Bacteroidia</taxon>
        <taxon>Bacteroidales</taxon>
        <taxon>Bacteroidaceae</taxon>
        <taxon>Bacteroides</taxon>
    </lineage>
</organism>
<reference key="1">
    <citation type="journal article" date="2005" name="Science">
        <title>Extensive DNA inversions in the B. fragilis genome control variable gene expression.</title>
        <authorList>
            <person name="Cerdeno-Tarraga A.-M."/>
            <person name="Patrick S."/>
            <person name="Crossman L.C."/>
            <person name="Blakely G."/>
            <person name="Abratt V."/>
            <person name="Lennard N."/>
            <person name="Poxton I."/>
            <person name="Duerden B."/>
            <person name="Harris B."/>
            <person name="Quail M.A."/>
            <person name="Barron A."/>
            <person name="Clark L."/>
            <person name="Corton C."/>
            <person name="Doggett J."/>
            <person name="Holden M.T.G."/>
            <person name="Larke N."/>
            <person name="Line A."/>
            <person name="Lord A."/>
            <person name="Norbertczak H."/>
            <person name="Ormond D."/>
            <person name="Price C."/>
            <person name="Rabbinowitsch E."/>
            <person name="Woodward J."/>
            <person name="Barrell B.G."/>
            <person name="Parkhill J."/>
        </authorList>
    </citation>
    <scope>NUCLEOTIDE SEQUENCE [LARGE SCALE GENOMIC DNA]</scope>
    <source>
        <strain>ATCC 25285 / DSM 2151 / CCUG 4856 / JCM 11019 / LMG 10263 / NCTC 9343 / Onslow / VPI 2553 / EN-2</strain>
    </source>
</reference>
<name>TRMN6_BACFN</name>
<keyword id="KW-0963">Cytoplasm</keyword>
<keyword id="KW-0489">Methyltransferase</keyword>
<keyword id="KW-0949">S-adenosyl-L-methionine</keyword>
<keyword id="KW-0808">Transferase</keyword>
<keyword id="KW-0819">tRNA processing</keyword>
<proteinExistence type="inferred from homology"/>
<protein>
    <recommendedName>
        <fullName evidence="1">tRNA1(Val) (adenine(37)-N6)-methyltransferase</fullName>
        <ecNumber evidence="1">2.1.1.223</ecNumber>
    </recommendedName>
    <alternativeName>
        <fullName evidence="1">tRNA m6A37 methyltransferase</fullName>
    </alternativeName>
</protein>
<sequence length="237" mass="26562">MSQPFFQFKQFTVWHDKCAMKVGTDGVLLGAWTPVESSARILDIGTGTGLVALMLAQRCSASVIALEIDGTAAQQAAENITRSPWGSRIEVVCQDFRLYSNKNNSLKYDTIVSNPPYFTDSLKCPDSQRNTARHNDNLSYEELLKGVSNLLSPNGTFTVVIPMDASDSFKDIASSQGLYPSRQLLVITKPGAPPKRTLISFTFIKQDCKEEKLLTEVSRHRYSDEYIKLTREFYLKM</sequence>
<gene>
    <name type="ordered locus">BF2394</name>
</gene>
<comment type="function">
    <text evidence="1">Specifically methylates the adenine in position 37 of tRNA(1)(Val) (anticodon cmo5UAC).</text>
</comment>
<comment type="catalytic activity">
    <reaction evidence="1">
        <text>adenosine(37) in tRNA1(Val) + S-adenosyl-L-methionine = N(6)-methyladenosine(37) in tRNA1(Val) + S-adenosyl-L-homocysteine + H(+)</text>
        <dbReference type="Rhea" id="RHEA:43160"/>
        <dbReference type="Rhea" id="RHEA-COMP:10369"/>
        <dbReference type="Rhea" id="RHEA-COMP:10370"/>
        <dbReference type="ChEBI" id="CHEBI:15378"/>
        <dbReference type="ChEBI" id="CHEBI:57856"/>
        <dbReference type="ChEBI" id="CHEBI:59789"/>
        <dbReference type="ChEBI" id="CHEBI:74411"/>
        <dbReference type="ChEBI" id="CHEBI:74449"/>
        <dbReference type="EC" id="2.1.1.223"/>
    </reaction>
</comment>
<comment type="subcellular location">
    <subcellularLocation>
        <location evidence="1">Cytoplasm</location>
    </subcellularLocation>
</comment>
<comment type="similarity">
    <text evidence="1">Belongs to the methyltransferase superfamily. tRNA (adenine-N(6)-)-methyltransferase family.</text>
</comment>
<feature type="chain" id="PRO_0000387342" description="tRNA1(Val) (adenine(37)-N6)-methyltransferase">
    <location>
        <begin position="1"/>
        <end position="237"/>
    </location>
</feature>
<dbReference type="EC" id="2.1.1.223" evidence="1"/>
<dbReference type="EMBL" id="CR626927">
    <property type="protein sequence ID" value="CAH08092.1"/>
    <property type="molecule type" value="Genomic_DNA"/>
</dbReference>
<dbReference type="RefSeq" id="WP_005803540.1">
    <property type="nucleotide sequence ID" value="NZ_UFTH01000001.1"/>
</dbReference>
<dbReference type="SMR" id="Q5LCS1"/>
<dbReference type="PaxDb" id="272559-BF9343_2311"/>
<dbReference type="DNASU" id="3285447"/>
<dbReference type="KEGG" id="bfs:BF9343_2311"/>
<dbReference type="eggNOG" id="COG4123">
    <property type="taxonomic scope" value="Bacteria"/>
</dbReference>
<dbReference type="HOGENOM" id="CLU_061983_0_0_10"/>
<dbReference type="Proteomes" id="UP000006731">
    <property type="component" value="Chromosome"/>
</dbReference>
<dbReference type="GO" id="GO:0005737">
    <property type="term" value="C:cytoplasm"/>
    <property type="evidence" value="ECO:0007669"/>
    <property type="project" value="UniProtKB-SubCell"/>
</dbReference>
<dbReference type="GO" id="GO:0003676">
    <property type="term" value="F:nucleic acid binding"/>
    <property type="evidence" value="ECO:0007669"/>
    <property type="project" value="InterPro"/>
</dbReference>
<dbReference type="GO" id="GO:0016430">
    <property type="term" value="F:tRNA (adenine-N6)-methyltransferase activity"/>
    <property type="evidence" value="ECO:0007669"/>
    <property type="project" value="UniProtKB-UniRule"/>
</dbReference>
<dbReference type="GO" id="GO:0032259">
    <property type="term" value="P:methylation"/>
    <property type="evidence" value="ECO:0007669"/>
    <property type="project" value="UniProtKB-KW"/>
</dbReference>
<dbReference type="GO" id="GO:0008033">
    <property type="term" value="P:tRNA processing"/>
    <property type="evidence" value="ECO:0007669"/>
    <property type="project" value="UniProtKB-UniRule"/>
</dbReference>
<dbReference type="CDD" id="cd02440">
    <property type="entry name" value="AdoMet_MTases"/>
    <property type="match status" value="1"/>
</dbReference>
<dbReference type="Gene3D" id="3.40.50.150">
    <property type="entry name" value="Vaccinia Virus protein VP39"/>
    <property type="match status" value="1"/>
</dbReference>
<dbReference type="HAMAP" id="MF_01872">
    <property type="entry name" value="tRNA_methyltr_YfiC"/>
    <property type="match status" value="1"/>
</dbReference>
<dbReference type="InterPro" id="IPR002052">
    <property type="entry name" value="DNA_methylase_N6_adenine_CS"/>
</dbReference>
<dbReference type="InterPro" id="IPR029063">
    <property type="entry name" value="SAM-dependent_MTases_sf"/>
</dbReference>
<dbReference type="InterPro" id="IPR007848">
    <property type="entry name" value="Small_mtfrase_dom"/>
</dbReference>
<dbReference type="InterPro" id="IPR050210">
    <property type="entry name" value="tRNA_Adenine-N(6)_MTase"/>
</dbReference>
<dbReference type="InterPro" id="IPR022882">
    <property type="entry name" value="tRNA_adenine-N6_MeTrfase"/>
</dbReference>
<dbReference type="PANTHER" id="PTHR47739">
    <property type="entry name" value="TRNA1(VAL) (ADENINE(37)-N6)-METHYLTRANSFERASE"/>
    <property type="match status" value="1"/>
</dbReference>
<dbReference type="PANTHER" id="PTHR47739:SF1">
    <property type="entry name" value="TRNA1(VAL) (ADENINE(37)-N6)-METHYLTRANSFERASE"/>
    <property type="match status" value="1"/>
</dbReference>
<dbReference type="Pfam" id="PF05175">
    <property type="entry name" value="MTS"/>
    <property type="match status" value="1"/>
</dbReference>
<dbReference type="PRINTS" id="PR00507">
    <property type="entry name" value="N12N6MTFRASE"/>
</dbReference>
<dbReference type="SUPFAM" id="SSF53335">
    <property type="entry name" value="S-adenosyl-L-methionine-dependent methyltransferases"/>
    <property type="match status" value="1"/>
</dbReference>
<dbReference type="PROSITE" id="PS00092">
    <property type="entry name" value="N6_MTASE"/>
    <property type="match status" value="1"/>
</dbReference>
<evidence type="ECO:0000255" key="1">
    <source>
        <dbReference type="HAMAP-Rule" id="MF_01872"/>
    </source>
</evidence>